<reference key="1">
    <citation type="journal article" date="1989" name="J. Mol. Biol.">
        <title>Organization and structure of the Methanococcus transcriptional unit homologous to the Escherichia coli 'spectinomycin operon'. Implications for the evolutionary relationship of 70 S and 80 S ribosomes.</title>
        <authorList>
            <person name="Auer J."/>
            <person name="Spicker G."/>
            <person name="Boeck A."/>
        </authorList>
    </citation>
    <scope>NUCLEOTIDE SEQUENCE [GENOMIC DNA]</scope>
</reference>
<protein>
    <recommendedName>
        <fullName evidence="1">Protein translation factor SUI1 homolog</fullName>
    </recommendedName>
</protein>
<sequence>MPEICPICGLPKDLCVCEEIAKEEQKIKVYVTKRRFGKLMTVVDGFDADLIDVKDLAKKLKDICACGGTVKKDSIELQGDHRKKAEEILIKMGFSKDMIDVR</sequence>
<name>SUI1_METVA</name>
<organism>
    <name type="scientific">Methanococcus vannielii</name>
    <dbReference type="NCBI Taxonomy" id="2187"/>
    <lineage>
        <taxon>Archaea</taxon>
        <taxon>Methanobacteriati</taxon>
        <taxon>Methanobacteriota</taxon>
        <taxon>Methanomada group</taxon>
        <taxon>Methanococci</taxon>
        <taxon>Methanococcales</taxon>
        <taxon>Methanococcaceae</taxon>
        <taxon>Methanococcus</taxon>
    </lineage>
</organism>
<proteinExistence type="inferred from homology"/>
<feature type="chain" id="PRO_0000130585" description="Protein translation factor SUI1 homolog">
    <location>
        <begin position="1"/>
        <end position="102"/>
    </location>
</feature>
<accession>P14021</accession>
<keyword id="KW-0648">Protein biosynthesis</keyword>
<keyword id="KW-0810">Translation regulation</keyword>
<evidence type="ECO:0000255" key="1">
    <source>
        <dbReference type="HAMAP-Rule" id="MF_00604"/>
    </source>
</evidence>
<comment type="similarity">
    <text evidence="1">Belongs to the SUI1 family.</text>
</comment>
<dbReference type="EMBL" id="X16720">
    <property type="protein sequence ID" value="CAA34687.1"/>
    <property type="molecule type" value="Genomic_DNA"/>
</dbReference>
<dbReference type="PIR" id="S05611">
    <property type="entry name" value="S05611"/>
</dbReference>
<dbReference type="SMR" id="P14021"/>
<dbReference type="GeneID" id="5326118"/>
<dbReference type="GO" id="GO:0003729">
    <property type="term" value="F:mRNA binding"/>
    <property type="evidence" value="ECO:0007669"/>
    <property type="project" value="TreeGrafter"/>
</dbReference>
<dbReference type="GO" id="GO:0003743">
    <property type="term" value="F:translation initiation factor activity"/>
    <property type="evidence" value="ECO:0007669"/>
    <property type="project" value="InterPro"/>
</dbReference>
<dbReference type="GO" id="GO:0001731">
    <property type="term" value="P:formation of translation preinitiation complex"/>
    <property type="evidence" value="ECO:0007669"/>
    <property type="project" value="TreeGrafter"/>
</dbReference>
<dbReference type="GO" id="GO:0006417">
    <property type="term" value="P:regulation of translation"/>
    <property type="evidence" value="ECO:0007669"/>
    <property type="project" value="UniProtKB-UniRule"/>
</dbReference>
<dbReference type="GO" id="GO:0002188">
    <property type="term" value="P:translation reinitiation"/>
    <property type="evidence" value="ECO:0007669"/>
    <property type="project" value="TreeGrafter"/>
</dbReference>
<dbReference type="CDD" id="cd11567">
    <property type="entry name" value="YciH_like"/>
    <property type="match status" value="1"/>
</dbReference>
<dbReference type="Gene3D" id="3.30.780.10">
    <property type="entry name" value="SUI1-like domain"/>
    <property type="match status" value="1"/>
</dbReference>
<dbReference type="HAMAP" id="MF_00604">
    <property type="entry name" value="SUI1"/>
    <property type="match status" value="1"/>
</dbReference>
<dbReference type="InterPro" id="IPR050318">
    <property type="entry name" value="DENR/SUI1_TIF"/>
</dbReference>
<dbReference type="InterPro" id="IPR001950">
    <property type="entry name" value="SUI1"/>
</dbReference>
<dbReference type="InterPro" id="IPR022851">
    <property type="entry name" value="SUI1_arc"/>
</dbReference>
<dbReference type="InterPro" id="IPR005872">
    <property type="entry name" value="SUI1_arc_bac"/>
</dbReference>
<dbReference type="InterPro" id="IPR036877">
    <property type="entry name" value="SUI1_dom_sf"/>
</dbReference>
<dbReference type="NCBIfam" id="NF002096">
    <property type="entry name" value="PRK00939.1"/>
    <property type="match status" value="1"/>
</dbReference>
<dbReference type="NCBIfam" id="TIGR01158">
    <property type="entry name" value="SUI1_rel"/>
    <property type="match status" value="1"/>
</dbReference>
<dbReference type="PANTHER" id="PTHR12789:SF0">
    <property type="entry name" value="DENSITY-REGULATED PROTEIN"/>
    <property type="match status" value="1"/>
</dbReference>
<dbReference type="PANTHER" id="PTHR12789">
    <property type="entry name" value="DENSITY-REGULATED PROTEIN HOMOLOG"/>
    <property type="match status" value="1"/>
</dbReference>
<dbReference type="Pfam" id="PF01253">
    <property type="entry name" value="SUI1"/>
    <property type="match status" value="1"/>
</dbReference>
<dbReference type="PIRSF" id="PIRSF037511">
    <property type="entry name" value="Transl_init_SUI1_pro"/>
    <property type="match status" value="1"/>
</dbReference>
<dbReference type="SUPFAM" id="SSF55159">
    <property type="entry name" value="eIF1-like"/>
    <property type="match status" value="1"/>
</dbReference>
<dbReference type="PROSITE" id="PS50296">
    <property type="entry name" value="SUI1"/>
    <property type="match status" value="1"/>
</dbReference>